<comment type="function">
    <text evidence="5">High affinity receptor for interleukin-3, interleukin-5 and granulocyte-macrophage colony-stimulating factor.</text>
</comment>
<comment type="subunit">
    <text evidence="1 5 6 7">Heterodimer of an alpha and a beta subunit (PubMed:10477686). The beta subunit is common to the IL3, IL5 and GM-CSF receptors. The signaling GM-CSF receptor complex is a dodecamer of two head-to-head hexamers of two alpha, two beta, and two ligand subunits. Interacts with TMEM102; this interaction occurs preferentially in the absence of CSF2 (By similarity). Interacts with FCER1G; this interaction is direct (PubMed:19098920). Interacts with LYN.</text>
</comment>
<comment type="interaction">
    <interactant intactId="EBI-1810026">
        <id>P26955</id>
    </interactant>
    <interactant intactId="EBI-644224">
        <id>P09055</id>
        <label>Itgb1</label>
    </interactant>
    <organismsDiffer>false</organismsDiffer>
    <experiments>2</experiments>
</comment>
<comment type="interaction">
    <interactant intactId="EBI-1810026">
        <id>P26955</id>
    </interactant>
    <interactant intactId="EBI-8559255">
        <id>P05532</id>
        <label>Kit</label>
    </interactant>
    <organismsDiffer>false</organismsDiffer>
    <experiments>4</experiments>
</comment>
<comment type="subcellular location">
    <subcellularLocation>
        <location>Membrane</location>
        <topology>Single-pass type I membrane protein</topology>
    </subcellularLocation>
</comment>
<comment type="domain">
    <text>The WSXWS motif appears to be necessary for proper protein folding and thereby efficient intracellular transport and cell-surface receptor binding.</text>
</comment>
<comment type="domain">
    <text>The box 1 motif is required for JAK interaction and/or activation.</text>
</comment>
<comment type="PTM">
    <text evidence="6">May be phosphorylated by LYN.</text>
</comment>
<comment type="similarity">
    <text evidence="8">Belongs to the type I cytokine receptor family. Type 4 subfamily.</text>
</comment>
<protein>
    <recommendedName>
        <fullName>Cytokine receptor common subunit beta</fullName>
    </recommendedName>
    <alternativeName>
        <fullName>GM-CSF/IL-3/IL-5 receptor common beta subunit</fullName>
    </alternativeName>
    <cdAntigenName>CD131</cdAntigenName>
</protein>
<organism>
    <name type="scientific">Mus musculus</name>
    <name type="common">Mouse</name>
    <dbReference type="NCBI Taxonomy" id="10090"/>
    <lineage>
        <taxon>Eukaryota</taxon>
        <taxon>Metazoa</taxon>
        <taxon>Chordata</taxon>
        <taxon>Craniata</taxon>
        <taxon>Vertebrata</taxon>
        <taxon>Euteleostomi</taxon>
        <taxon>Mammalia</taxon>
        <taxon>Eutheria</taxon>
        <taxon>Euarchontoglires</taxon>
        <taxon>Glires</taxon>
        <taxon>Rodentia</taxon>
        <taxon>Myomorpha</taxon>
        <taxon>Muroidea</taxon>
        <taxon>Muridae</taxon>
        <taxon>Murinae</taxon>
        <taxon>Mus</taxon>
        <taxon>Mus</taxon>
    </lineage>
</organism>
<keyword id="KW-1015">Disulfide bond</keyword>
<keyword id="KW-0325">Glycoprotein</keyword>
<keyword id="KW-0472">Membrane</keyword>
<keyword id="KW-0597">Phosphoprotein</keyword>
<keyword id="KW-0675">Receptor</keyword>
<keyword id="KW-1185">Reference proteome</keyword>
<keyword id="KW-0677">Repeat</keyword>
<keyword id="KW-0732">Signal</keyword>
<keyword id="KW-0812">Transmembrane</keyword>
<keyword id="KW-1133">Transmembrane helix</keyword>
<sequence length="896" mass="99036">MDQQMALTWGLCYMALVALCWGHGVTEAEETVPLKTLQCYNDYTNHIICSWADTEDAQGLINMTLYHQLEKKQPVSCELSEELMWSECPSSHRCVPRRCVIPYTRFSITNEDYYSFRPDSDLGIQLMVPLAQNVQPPLPKNVSISSSEDRFLLEWSVSLGDAQVSWLSSKDIEFEVAYKRLQDSWEDAYSLHTSKFQVNFEPKLFLPNSIYAARVRTRLSPGSSLSGRPSRWSPEVHWDSQPGDKAQPQNLQCFFDGIQSLHCSWEVWTQTTGSVSFGLFYRPSPVAPEEKCSPVVKEPPGASVYTRYHCSLPVPEPSAHSQYTVSVKHLEQGKFIMSYNHIQMEPPTLNLTKNRDSYSLHWETQKMAYSFIEHTFQVQYKKKSDSWEDSKTENLDRAHSMDLSQLEPDTSYCARVRVKPISNYDGIWSKWSEEYTWKTDWVMPTLWIVLILVFLILTLLLILRFGCVSVYRTYRKWKEKIPNPSKSLLFQDGGKGLWPPGSMAAFATKNPALQGPQSRLLAEQQGESYAHLEDNNVSPLTIEDPNIIRVPPSGPDTTPAASSESTEQLPNVQVEGPTPNRPRKQLPSFDFNGPYLGPPQSHSLPDLPDQLGSPQVGGSLKPALPGSLEYMCLPPGGQAQLVPLSQVMGQGQAMDVQCGSSLETSGSPSVEPKENPPVELSMEEQEARDNPVTLPISSGGPEGSMMASDYVTPGDPVLTLPTGPLSTSLGPSLGLPSAQSPSLCLKLPRVPSGSPALGPPGFEDYVELPPSVSQAAKSPPGHPAPPVASSPTVIPGEPREEVGPASPHPEGLLVLQQVGDYCFLPGLGPGSLSPHSKPPSPSLCSETEDLVQDLSVKKFPYQPMPQAPAIQFFKSLKHQDYLSLPPWDNSQSGKVC</sequence>
<gene>
    <name type="primary">Csf2rb</name>
    <name type="synonym">Aic2b</name>
    <name type="synonym">Csf2rb1</name>
    <name type="synonym">Il3rb1</name>
</gene>
<reference key="1">
    <citation type="journal article" date="1990" name="Proc. Natl. Acad. Sci. U.S.A.">
        <title>Cloning and expression of a gene encoding an interleukin 3 receptor-like protein: identification of another member of the cytokine receptor gene family.</title>
        <authorList>
            <person name="Gorman D.M."/>
            <person name="Itoh N."/>
            <person name="Kitamura T."/>
            <person name="Schreurs J."/>
            <person name="Yonehara S."/>
            <person name="Yahara I."/>
            <person name="Arai K."/>
            <person name="Miyajima A."/>
        </authorList>
    </citation>
    <scope>NUCLEOTIDE SEQUENCE [MRNA]</scope>
</reference>
<reference key="2">
    <citation type="journal article" date="2005" name="Science">
        <title>The transcriptional landscape of the mammalian genome.</title>
        <authorList>
            <person name="Carninci P."/>
            <person name="Kasukawa T."/>
            <person name="Katayama S."/>
            <person name="Gough J."/>
            <person name="Frith M.C."/>
            <person name="Maeda N."/>
            <person name="Oyama R."/>
            <person name="Ravasi T."/>
            <person name="Lenhard B."/>
            <person name="Wells C."/>
            <person name="Kodzius R."/>
            <person name="Shimokawa K."/>
            <person name="Bajic V.B."/>
            <person name="Brenner S.E."/>
            <person name="Batalov S."/>
            <person name="Forrest A.R."/>
            <person name="Zavolan M."/>
            <person name="Davis M.J."/>
            <person name="Wilming L.G."/>
            <person name="Aidinis V."/>
            <person name="Allen J.E."/>
            <person name="Ambesi-Impiombato A."/>
            <person name="Apweiler R."/>
            <person name="Aturaliya R.N."/>
            <person name="Bailey T.L."/>
            <person name="Bansal M."/>
            <person name="Baxter L."/>
            <person name="Beisel K.W."/>
            <person name="Bersano T."/>
            <person name="Bono H."/>
            <person name="Chalk A.M."/>
            <person name="Chiu K.P."/>
            <person name="Choudhary V."/>
            <person name="Christoffels A."/>
            <person name="Clutterbuck D.R."/>
            <person name="Crowe M.L."/>
            <person name="Dalla E."/>
            <person name="Dalrymple B.P."/>
            <person name="de Bono B."/>
            <person name="Della Gatta G."/>
            <person name="di Bernardo D."/>
            <person name="Down T."/>
            <person name="Engstrom P."/>
            <person name="Fagiolini M."/>
            <person name="Faulkner G."/>
            <person name="Fletcher C.F."/>
            <person name="Fukushima T."/>
            <person name="Furuno M."/>
            <person name="Futaki S."/>
            <person name="Gariboldi M."/>
            <person name="Georgii-Hemming P."/>
            <person name="Gingeras T.R."/>
            <person name="Gojobori T."/>
            <person name="Green R.E."/>
            <person name="Gustincich S."/>
            <person name="Harbers M."/>
            <person name="Hayashi Y."/>
            <person name="Hensch T.K."/>
            <person name="Hirokawa N."/>
            <person name="Hill D."/>
            <person name="Huminiecki L."/>
            <person name="Iacono M."/>
            <person name="Ikeo K."/>
            <person name="Iwama A."/>
            <person name="Ishikawa T."/>
            <person name="Jakt M."/>
            <person name="Kanapin A."/>
            <person name="Katoh M."/>
            <person name="Kawasawa Y."/>
            <person name="Kelso J."/>
            <person name="Kitamura H."/>
            <person name="Kitano H."/>
            <person name="Kollias G."/>
            <person name="Krishnan S.P."/>
            <person name="Kruger A."/>
            <person name="Kummerfeld S.K."/>
            <person name="Kurochkin I.V."/>
            <person name="Lareau L.F."/>
            <person name="Lazarevic D."/>
            <person name="Lipovich L."/>
            <person name="Liu J."/>
            <person name="Liuni S."/>
            <person name="McWilliam S."/>
            <person name="Madan Babu M."/>
            <person name="Madera M."/>
            <person name="Marchionni L."/>
            <person name="Matsuda H."/>
            <person name="Matsuzawa S."/>
            <person name="Miki H."/>
            <person name="Mignone F."/>
            <person name="Miyake S."/>
            <person name="Morris K."/>
            <person name="Mottagui-Tabar S."/>
            <person name="Mulder N."/>
            <person name="Nakano N."/>
            <person name="Nakauchi H."/>
            <person name="Ng P."/>
            <person name="Nilsson R."/>
            <person name="Nishiguchi S."/>
            <person name="Nishikawa S."/>
            <person name="Nori F."/>
            <person name="Ohara O."/>
            <person name="Okazaki Y."/>
            <person name="Orlando V."/>
            <person name="Pang K.C."/>
            <person name="Pavan W.J."/>
            <person name="Pavesi G."/>
            <person name="Pesole G."/>
            <person name="Petrovsky N."/>
            <person name="Piazza S."/>
            <person name="Reed J."/>
            <person name="Reid J.F."/>
            <person name="Ring B.Z."/>
            <person name="Ringwald M."/>
            <person name="Rost B."/>
            <person name="Ruan Y."/>
            <person name="Salzberg S.L."/>
            <person name="Sandelin A."/>
            <person name="Schneider C."/>
            <person name="Schoenbach C."/>
            <person name="Sekiguchi K."/>
            <person name="Semple C.A."/>
            <person name="Seno S."/>
            <person name="Sessa L."/>
            <person name="Sheng Y."/>
            <person name="Shibata Y."/>
            <person name="Shimada H."/>
            <person name="Shimada K."/>
            <person name="Silva D."/>
            <person name="Sinclair B."/>
            <person name="Sperling S."/>
            <person name="Stupka E."/>
            <person name="Sugiura K."/>
            <person name="Sultana R."/>
            <person name="Takenaka Y."/>
            <person name="Taki K."/>
            <person name="Tammoja K."/>
            <person name="Tan S.L."/>
            <person name="Tang S."/>
            <person name="Taylor M.S."/>
            <person name="Tegner J."/>
            <person name="Teichmann S.A."/>
            <person name="Ueda H.R."/>
            <person name="van Nimwegen E."/>
            <person name="Verardo R."/>
            <person name="Wei C.L."/>
            <person name="Yagi K."/>
            <person name="Yamanishi H."/>
            <person name="Zabarovsky E."/>
            <person name="Zhu S."/>
            <person name="Zimmer A."/>
            <person name="Hide W."/>
            <person name="Bult C."/>
            <person name="Grimmond S.M."/>
            <person name="Teasdale R.D."/>
            <person name="Liu E.T."/>
            <person name="Brusic V."/>
            <person name="Quackenbush J."/>
            <person name="Wahlestedt C."/>
            <person name="Mattick J.S."/>
            <person name="Hume D.A."/>
            <person name="Kai C."/>
            <person name="Sasaki D."/>
            <person name="Tomaru Y."/>
            <person name="Fukuda S."/>
            <person name="Kanamori-Katayama M."/>
            <person name="Suzuki M."/>
            <person name="Aoki J."/>
            <person name="Arakawa T."/>
            <person name="Iida J."/>
            <person name="Imamura K."/>
            <person name="Itoh M."/>
            <person name="Kato T."/>
            <person name="Kawaji H."/>
            <person name="Kawagashira N."/>
            <person name="Kawashima T."/>
            <person name="Kojima M."/>
            <person name="Kondo S."/>
            <person name="Konno H."/>
            <person name="Nakano K."/>
            <person name="Ninomiya N."/>
            <person name="Nishio T."/>
            <person name="Okada M."/>
            <person name="Plessy C."/>
            <person name="Shibata K."/>
            <person name="Shiraki T."/>
            <person name="Suzuki S."/>
            <person name="Tagami M."/>
            <person name="Waki K."/>
            <person name="Watahiki A."/>
            <person name="Okamura-Oho Y."/>
            <person name="Suzuki H."/>
            <person name="Kawai J."/>
            <person name="Hayashizaki Y."/>
        </authorList>
    </citation>
    <scope>NUCLEOTIDE SEQUENCE [LARGE SCALE MRNA]</scope>
    <source>
        <strain>C57BL/6J</strain>
        <tissue>Bone marrow</tissue>
    </source>
</reference>
<reference key="3">
    <citation type="journal article" date="1999" name="Blood">
        <title>Heterodimerization of the alpha and beta chains of the interleukin-3 (IL-3) receptor is necessary and sufficient for IL-3-induced mitogenesis.</title>
        <authorList>
            <person name="Orban P.C."/>
            <person name="Levings M.K."/>
            <person name="Schrader J.W."/>
        </authorList>
    </citation>
    <scope>FUNCTION</scope>
    <scope>INTERACTION WITH IL3RA</scope>
</reference>
<reference key="4">
    <citation type="journal article" date="2000" name="Genes Cells">
        <title>Association of Lyn tyrosine kinase to the GM-CSF and IL-3 receptor common betac subunit and role of Src tyrosine kinases in DNA synthesis and anti-apoptosis.</title>
        <authorList>
            <person name="Dahl M.E."/>
            <person name="Arai K.I."/>
            <person name="Watanabe S."/>
        </authorList>
    </citation>
    <scope>PHOSPHORYLATION</scope>
    <scope>INTERACTION WITH LYN</scope>
</reference>
<reference key="5">
    <citation type="journal article" date="2007" name="J. Immunol.">
        <title>Quantitative time-resolved phosphoproteomic analysis of mast cell signaling.</title>
        <authorList>
            <person name="Cao L."/>
            <person name="Yu K."/>
            <person name="Banh C."/>
            <person name="Nguyen V."/>
            <person name="Ritz A."/>
            <person name="Raphael B.J."/>
            <person name="Kawakami Y."/>
            <person name="Kawakami T."/>
            <person name="Salomon A.R."/>
        </authorList>
    </citation>
    <scope>PHOSPHORYLATION [LARGE SCALE ANALYSIS] AT SER-752; SER-754 AND TYR-765</scope>
    <scope>IDENTIFICATION BY MASS SPECTROMETRY [LARGE SCALE ANALYSIS]</scope>
    <source>
        <tissue>Mast cell</tissue>
    </source>
</reference>
<reference key="6">
    <citation type="journal article" date="2009" name="Nat. Immunol.">
        <title>Fc receptor gamma-chain, a constitutive component of the IL-3 receptor, is required for IL-3-induced IL-4 production in basophils.</title>
        <authorList>
            <person name="Hida S."/>
            <person name="Yamasaki S."/>
            <person name="Sakamoto Y."/>
            <person name="Takamoto M."/>
            <person name="Obata K."/>
            <person name="Takai T."/>
            <person name="Karasuyama H."/>
            <person name="Sugane K."/>
            <person name="Saito T."/>
            <person name="Taki S."/>
        </authorList>
    </citation>
    <scope>INTERACTION WITH FCER1G</scope>
</reference>
<name>IL3RB_MOUSE</name>
<proteinExistence type="evidence at protein level"/>
<feature type="signal peptide" evidence="2">
    <location>
        <begin position="1"/>
        <end position="22"/>
    </location>
</feature>
<feature type="chain" id="PRO_0000010863" description="Cytokine receptor common subunit beta">
    <location>
        <begin position="23"/>
        <end position="896"/>
    </location>
</feature>
<feature type="topological domain" description="Extracellular" evidence="2">
    <location>
        <begin position="23"/>
        <end position="441"/>
    </location>
</feature>
<feature type="transmembrane region" description="Helical" evidence="2">
    <location>
        <begin position="442"/>
        <end position="463"/>
    </location>
</feature>
<feature type="topological domain" description="Cytoplasmic" evidence="2">
    <location>
        <begin position="464"/>
        <end position="896"/>
    </location>
</feature>
<feature type="domain" description="Fibronectin type-III 1" evidence="3">
    <location>
        <begin position="136"/>
        <end position="243"/>
    </location>
</feature>
<feature type="domain" description="Fibronectin type-III 2" evidence="3">
    <location>
        <begin position="343"/>
        <end position="439"/>
    </location>
</feature>
<feature type="region of interest" description="Disordered" evidence="4">
    <location>
        <begin position="220"/>
        <end position="243"/>
    </location>
</feature>
<feature type="region of interest" description="Disordered" evidence="4">
    <location>
        <begin position="543"/>
        <end position="620"/>
    </location>
</feature>
<feature type="region of interest" description="Disordered" evidence="4">
    <location>
        <begin position="658"/>
        <end position="725"/>
    </location>
</feature>
<feature type="region of interest" description="Disordered" evidence="4">
    <location>
        <begin position="771"/>
        <end position="810"/>
    </location>
</feature>
<feature type="short sequence motif" description="WSXWS motif">
    <location>
        <begin position="428"/>
        <end position="432"/>
    </location>
</feature>
<feature type="short sequence motif" description="Box 1 motif">
    <location>
        <begin position="477"/>
        <end position="485"/>
    </location>
</feature>
<feature type="compositionally biased region" description="Low complexity" evidence="4">
    <location>
        <begin position="220"/>
        <end position="233"/>
    </location>
</feature>
<feature type="compositionally biased region" description="Polar residues" evidence="4">
    <location>
        <begin position="555"/>
        <end position="571"/>
    </location>
</feature>
<feature type="compositionally biased region" description="Polar residues" evidence="4">
    <location>
        <begin position="658"/>
        <end position="668"/>
    </location>
</feature>
<feature type="compositionally biased region" description="Low complexity" evidence="4">
    <location>
        <begin position="716"/>
        <end position="725"/>
    </location>
</feature>
<feature type="modified residue" description="Phosphoserine" evidence="9">
    <location>
        <position position="752"/>
    </location>
</feature>
<feature type="modified residue" description="Phosphoserine" evidence="9">
    <location>
        <position position="754"/>
    </location>
</feature>
<feature type="modified residue" description="Phosphotyrosine" evidence="9">
    <location>
        <position position="765"/>
    </location>
</feature>
<feature type="glycosylation site" description="N-linked (GlcNAc...) asparagine" evidence="2">
    <location>
        <position position="62"/>
    </location>
</feature>
<feature type="glycosylation site" description="N-linked (GlcNAc...) asparagine" evidence="2">
    <location>
        <position position="141"/>
    </location>
</feature>
<feature type="glycosylation site" description="N-linked (GlcNAc...) asparagine" evidence="2">
    <location>
        <position position="350"/>
    </location>
</feature>
<feature type="disulfide bond" evidence="1">
    <location>
        <begin position="39"/>
        <end position="49"/>
    </location>
</feature>
<feature type="disulfide bond" evidence="1">
    <location>
        <begin position="77"/>
        <end position="99"/>
    </location>
</feature>
<feature type="disulfide bond" evidence="1">
    <location>
        <begin position="88"/>
        <end position="94"/>
    </location>
</feature>
<feature type="disulfide bond" evidence="1">
    <location>
        <begin position="253"/>
        <end position="263"/>
    </location>
</feature>
<feature type="disulfide bond" evidence="1">
    <location>
        <begin position="292"/>
        <end position="310"/>
    </location>
</feature>
<feature type="sequence conflict" description="In Ref. 1; AAA37204." evidence="8" ref="1">
    <original>E</original>
    <variation>K</variation>
    <location>
        <position position="82"/>
    </location>
</feature>
<feature type="sequence conflict" description="In Ref. 1; AAA37204." evidence="8" ref="1">
    <original>A</original>
    <variation>P</variation>
    <location>
        <position position="213"/>
    </location>
</feature>
<feature type="sequence conflict" description="In Ref. 1; AAA37204." evidence="8" ref="1">
    <original>S</original>
    <variation>Y</variation>
    <location>
        <position position="220"/>
    </location>
</feature>
<feature type="sequence conflict" description="In Ref. 1; AAA37204." evidence="8" ref="1">
    <original>V</original>
    <variation>A</variation>
    <location>
        <position position="236"/>
    </location>
</feature>
<feature type="sequence conflict" description="In Ref. 1; AAA37204." evidence="8" ref="1">
    <original>P</original>
    <variation>A</variation>
    <location>
        <position position="634"/>
    </location>
</feature>
<feature type="sequence conflict" description="In Ref. 1; AAA37204." evidence="8" ref="1">
    <original>A</original>
    <variation>V</variation>
    <location>
        <position position="639"/>
    </location>
</feature>
<evidence type="ECO:0000250" key="1"/>
<evidence type="ECO:0000255" key="2"/>
<evidence type="ECO:0000255" key="3">
    <source>
        <dbReference type="PROSITE-ProRule" id="PRU00316"/>
    </source>
</evidence>
<evidence type="ECO:0000256" key="4">
    <source>
        <dbReference type="SAM" id="MobiDB-lite"/>
    </source>
</evidence>
<evidence type="ECO:0000269" key="5">
    <source>
    </source>
</evidence>
<evidence type="ECO:0000269" key="6">
    <source>
    </source>
</evidence>
<evidence type="ECO:0000269" key="7">
    <source>
    </source>
</evidence>
<evidence type="ECO:0000305" key="8"/>
<evidence type="ECO:0007744" key="9">
    <source>
    </source>
</evidence>
<dbReference type="EMBL" id="M34397">
    <property type="protein sequence ID" value="AAA37204.1"/>
    <property type="molecule type" value="mRNA"/>
</dbReference>
<dbReference type="EMBL" id="AK152608">
    <property type="protein sequence ID" value="BAE31354.1"/>
    <property type="molecule type" value="mRNA"/>
</dbReference>
<dbReference type="CCDS" id="CCDS27612.1"/>
<dbReference type="PIR" id="A35782">
    <property type="entry name" value="A35782"/>
</dbReference>
<dbReference type="RefSeq" id="NP_001345783.1">
    <property type="nucleotide sequence ID" value="NM_001358854.1"/>
</dbReference>
<dbReference type="RefSeq" id="NP_031806.3">
    <property type="nucleotide sequence ID" value="NM_007780.4"/>
</dbReference>
<dbReference type="RefSeq" id="XP_006520450.1">
    <property type="nucleotide sequence ID" value="XM_006520387.3"/>
</dbReference>
<dbReference type="SMR" id="P26955"/>
<dbReference type="BioGRID" id="198932">
    <property type="interactions" value="4"/>
</dbReference>
<dbReference type="CORUM" id="P26955"/>
<dbReference type="DIP" id="DIP-46527N"/>
<dbReference type="FunCoup" id="P26955">
    <property type="interactions" value="772"/>
</dbReference>
<dbReference type="IntAct" id="P26955">
    <property type="interactions" value="3"/>
</dbReference>
<dbReference type="STRING" id="10090.ENSMUSP00000154836"/>
<dbReference type="GlyCosmos" id="P26955">
    <property type="glycosylation" value="3 sites, No reported glycans"/>
</dbReference>
<dbReference type="GlyGen" id="P26955">
    <property type="glycosylation" value="5 sites"/>
</dbReference>
<dbReference type="iPTMnet" id="P26955"/>
<dbReference type="PhosphoSitePlus" id="P26955"/>
<dbReference type="PaxDb" id="10090-ENSMUSP00000094082"/>
<dbReference type="ProteomicsDB" id="301650"/>
<dbReference type="DNASU" id="12983"/>
<dbReference type="Ensembl" id="ENSMUST00000096355.4">
    <property type="protein sequence ID" value="ENSMUSP00000094082.4"/>
    <property type="gene ID" value="ENSMUSG00000071713.7"/>
</dbReference>
<dbReference type="Ensembl" id="ENSMUST00000230264.3">
    <property type="protein sequence ID" value="ENSMUSP00000154836.2"/>
    <property type="gene ID" value="ENSMUSG00000071713.7"/>
</dbReference>
<dbReference type="GeneID" id="12983"/>
<dbReference type="KEGG" id="mmu:12983"/>
<dbReference type="UCSC" id="uc007woz.2">
    <property type="organism name" value="mouse"/>
</dbReference>
<dbReference type="AGR" id="MGI:1339759"/>
<dbReference type="CTD" id="1439"/>
<dbReference type="MGI" id="MGI:1339759">
    <property type="gene designation" value="Csf2rb"/>
</dbReference>
<dbReference type="VEuPathDB" id="HostDB:ENSMUSG00000071713"/>
<dbReference type="eggNOG" id="ENOG502RP2T">
    <property type="taxonomic scope" value="Eukaryota"/>
</dbReference>
<dbReference type="GeneTree" id="ENSGT00510000048963"/>
<dbReference type="HOGENOM" id="CLU_015884_0_0_1"/>
<dbReference type="InParanoid" id="P26955"/>
<dbReference type="OMA" id="LRFCGMY"/>
<dbReference type="OrthoDB" id="8906725at2759"/>
<dbReference type="PhylomeDB" id="P26955"/>
<dbReference type="TreeFam" id="TF337996"/>
<dbReference type="Reactome" id="R-MMU-512988">
    <property type="pathway name" value="Interleukin-3, Interleukin-5 and GM-CSF signaling"/>
</dbReference>
<dbReference type="Reactome" id="R-MMU-5673001">
    <property type="pathway name" value="RAF/MAP kinase cascade"/>
</dbReference>
<dbReference type="Reactome" id="R-MMU-912526">
    <property type="pathway name" value="Interleukin receptor SHC signaling"/>
</dbReference>
<dbReference type="BioGRID-ORCS" id="12983">
    <property type="hits" value="3 hits in 78 CRISPR screens"/>
</dbReference>
<dbReference type="PRO" id="PR:P26955"/>
<dbReference type="Proteomes" id="UP000000589">
    <property type="component" value="Chromosome 15"/>
</dbReference>
<dbReference type="RNAct" id="P26955">
    <property type="molecule type" value="protein"/>
</dbReference>
<dbReference type="Bgee" id="ENSMUSG00000071713">
    <property type="expression patterns" value="Expressed in mesenteric lymph node and 134 other cell types or tissues"/>
</dbReference>
<dbReference type="ExpressionAtlas" id="P26955">
    <property type="expression patterns" value="baseline and differential"/>
</dbReference>
<dbReference type="GO" id="GO:0016020">
    <property type="term" value="C:membrane"/>
    <property type="evidence" value="ECO:0007669"/>
    <property type="project" value="UniProtKB-SubCell"/>
</dbReference>
<dbReference type="GO" id="GO:0004896">
    <property type="term" value="F:cytokine receptor activity"/>
    <property type="evidence" value="ECO:0007669"/>
    <property type="project" value="InterPro"/>
</dbReference>
<dbReference type="GO" id="GO:0019221">
    <property type="term" value="P:cytokine-mediated signaling pathway"/>
    <property type="evidence" value="ECO:0000314"/>
    <property type="project" value="MGI"/>
</dbReference>
<dbReference type="GO" id="GO:0001558">
    <property type="term" value="P:regulation of cell growth"/>
    <property type="evidence" value="ECO:0000316"/>
    <property type="project" value="MGI"/>
</dbReference>
<dbReference type="CDD" id="cd00063">
    <property type="entry name" value="FN3"/>
    <property type="match status" value="1"/>
</dbReference>
<dbReference type="FunFam" id="2.60.40.10:FF:001517">
    <property type="entry name" value="Cytokine receptor common subunit beta"/>
    <property type="match status" value="1"/>
</dbReference>
<dbReference type="FunFam" id="2.60.40.10:FF:001654">
    <property type="entry name" value="Cytokine receptor common subunit beta"/>
    <property type="match status" value="1"/>
</dbReference>
<dbReference type="Gene3D" id="2.60.40.10">
    <property type="entry name" value="Immunoglobulins"/>
    <property type="match status" value="4"/>
</dbReference>
<dbReference type="InterPro" id="IPR003961">
    <property type="entry name" value="FN3_dom"/>
</dbReference>
<dbReference type="InterPro" id="IPR036116">
    <property type="entry name" value="FN3_sf"/>
</dbReference>
<dbReference type="InterPro" id="IPR015152">
    <property type="entry name" value="Growth/epo_recpt_lig-bind"/>
</dbReference>
<dbReference type="InterPro" id="IPR003531">
    <property type="entry name" value="Hempt_rcpt_S_F1_CS"/>
</dbReference>
<dbReference type="InterPro" id="IPR013783">
    <property type="entry name" value="Ig-like_fold"/>
</dbReference>
<dbReference type="InterPro" id="IPR011365">
    <property type="entry name" value="IL3_rcpt_beta"/>
</dbReference>
<dbReference type="InterPro" id="IPR048668">
    <property type="entry name" value="IL3RB_N"/>
</dbReference>
<dbReference type="InterPro" id="IPR015373">
    <property type="entry name" value="Interferon/interleukin_rcp_dom"/>
</dbReference>
<dbReference type="PANTHER" id="PTHR23037">
    <property type="entry name" value="CYTOKINE RECEPTOR"/>
    <property type="match status" value="1"/>
</dbReference>
<dbReference type="PANTHER" id="PTHR23037:SF22">
    <property type="entry name" value="CYTOKINE RECEPTOR COMMON SUBUNIT BETA"/>
    <property type="match status" value="1"/>
</dbReference>
<dbReference type="Pfam" id="PF09067">
    <property type="entry name" value="EpoR_lig-bind"/>
    <property type="match status" value="1"/>
</dbReference>
<dbReference type="Pfam" id="PF21460">
    <property type="entry name" value="IL3Rb_N"/>
    <property type="match status" value="1"/>
</dbReference>
<dbReference type="Pfam" id="PF09294">
    <property type="entry name" value="Interfer-bind"/>
    <property type="match status" value="1"/>
</dbReference>
<dbReference type="PIRSF" id="PIRSF001956">
    <property type="entry name" value="IL3R_beta_c"/>
    <property type="match status" value="1"/>
</dbReference>
<dbReference type="SMART" id="SM00060">
    <property type="entry name" value="FN3"/>
    <property type="match status" value="2"/>
</dbReference>
<dbReference type="SUPFAM" id="SSF49265">
    <property type="entry name" value="Fibronectin type III"/>
    <property type="match status" value="4"/>
</dbReference>
<dbReference type="PROSITE" id="PS50853">
    <property type="entry name" value="FN3"/>
    <property type="match status" value="2"/>
</dbReference>
<dbReference type="PROSITE" id="PS01355">
    <property type="entry name" value="HEMATOPO_REC_S_F1"/>
    <property type="match status" value="1"/>
</dbReference>
<accession>P26955</accession>
<accession>Q3U7L5</accession>